<reference key="1">
    <citation type="journal article" date="2007" name="BMC Genomics">
        <title>Comparative chloroplast genomics: analyses including new sequences from the angiosperms Nuphar advena and Ranunculus macranthus.</title>
        <authorList>
            <person name="Raubeson L.A."/>
            <person name="Peery R."/>
            <person name="Chumley T.W."/>
            <person name="Dziubek C."/>
            <person name="Fourcade H.M."/>
            <person name="Boore J.L."/>
            <person name="Jansen R.K."/>
        </authorList>
    </citation>
    <scope>NUCLEOTIDE SEQUENCE [LARGE SCALE GENOMIC DNA]</scope>
</reference>
<name>ATPA_RANMC</name>
<protein>
    <recommendedName>
        <fullName evidence="1">ATP synthase subunit alpha, chloroplastic</fullName>
        <ecNumber evidence="1">7.1.2.2</ecNumber>
    </recommendedName>
    <alternativeName>
        <fullName evidence="1">ATP synthase F1 sector subunit alpha</fullName>
    </alternativeName>
    <alternativeName>
        <fullName evidence="1">F-ATPase subunit alpha</fullName>
    </alternativeName>
</protein>
<organism>
    <name type="scientific">Ranunculus macranthus</name>
    <name type="common">Large buttercup</name>
    <dbReference type="NCBI Taxonomy" id="334596"/>
    <lineage>
        <taxon>Eukaryota</taxon>
        <taxon>Viridiplantae</taxon>
        <taxon>Streptophyta</taxon>
        <taxon>Embryophyta</taxon>
        <taxon>Tracheophyta</taxon>
        <taxon>Spermatophyta</taxon>
        <taxon>Magnoliopsida</taxon>
        <taxon>Ranunculales</taxon>
        <taxon>Ranunculaceae</taxon>
        <taxon>Ranunculoideae</taxon>
        <taxon>Ranunculeae</taxon>
        <taxon>Ranunculus</taxon>
    </lineage>
</organism>
<gene>
    <name evidence="1" type="primary">atpA</name>
</gene>
<proteinExistence type="inferred from homology"/>
<comment type="function">
    <text evidence="1">Produces ATP from ADP in the presence of a proton gradient across the membrane. The alpha chain is a regulatory subunit.</text>
</comment>
<comment type="catalytic activity">
    <reaction evidence="1">
        <text>ATP + H2O + 4 H(+)(in) = ADP + phosphate + 5 H(+)(out)</text>
        <dbReference type="Rhea" id="RHEA:57720"/>
        <dbReference type="ChEBI" id="CHEBI:15377"/>
        <dbReference type="ChEBI" id="CHEBI:15378"/>
        <dbReference type="ChEBI" id="CHEBI:30616"/>
        <dbReference type="ChEBI" id="CHEBI:43474"/>
        <dbReference type="ChEBI" id="CHEBI:456216"/>
        <dbReference type="EC" id="7.1.2.2"/>
    </reaction>
</comment>
<comment type="subunit">
    <text evidence="1">F-type ATPases have 2 components, CF(1) - the catalytic core - and CF(0) - the membrane proton channel. CF(1) has five subunits: alpha(3), beta(3), gamma(1), delta(1), epsilon(1). CF(0) has four main subunits: a, b, b' and c.</text>
</comment>
<comment type="subcellular location">
    <subcellularLocation>
        <location evidence="1">Plastid</location>
        <location evidence="1">Chloroplast thylakoid membrane</location>
        <topology evidence="1">Peripheral membrane protein</topology>
    </subcellularLocation>
</comment>
<comment type="similarity">
    <text evidence="1">Belongs to the ATPase alpha/beta chains family.</text>
</comment>
<accession>A1XGM3</accession>
<evidence type="ECO:0000255" key="1">
    <source>
        <dbReference type="HAMAP-Rule" id="MF_01346"/>
    </source>
</evidence>
<sequence length="507" mass="55539">MATLRADEISNIIRERIEQYNREVKIVNTGTVLQVGDGIARIHGLDEVMAGELVEFEEKTVGIALNLESNNVGVVLMGDGLMIQEGSSVKATGRIAQIPVSEDYLGRVINALAKPIDGRGEISASESRLIESPAPGIISRRSVYEPMQTGLIAIDAMIPIGRGQRELIIGDRQTGKTAVATDTILNQKGQNVICVYVAIGQKASSVAQVVTTFQEQGVMEYTIVVAETADAPATLQYLAPYTGAALAEYFMYRERHTLIIYDDLSKQAQAYRQMSLLLRRPPGREAYPGDVFYLHSRLLERAAKLSSRLGEGSMTALPIVETQSGDVSAYIPTNVISITDGQIFLSADLFNSGIRPAINVGISVSRVGSAAQIKAMKQVAGKLKLELAQFAELEAFAQFASDLDKATQNQLARGQRLRELLKQSQAAPLTVEEQVVTIYTGTNGYLDSLEIGQVKKFLVQLRTYLKSSKPQFQEIISSTKTFTEEAEVLLKEAIQEQMERFLLQEQT</sequence>
<dbReference type="EC" id="7.1.2.2" evidence="1"/>
<dbReference type="EMBL" id="DQ359689">
    <property type="protein sequence ID" value="ABC70741.1"/>
    <property type="molecule type" value="Genomic_DNA"/>
</dbReference>
<dbReference type="RefSeq" id="YP_001004171.1">
    <property type="nucleotide sequence ID" value="NC_008796.1"/>
</dbReference>
<dbReference type="SMR" id="A1XGM3"/>
<dbReference type="GeneID" id="4712155"/>
<dbReference type="GO" id="GO:0009535">
    <property type="term" value="C:chloroplast thylakoid membrane"/>
    <property type="evidence" value="ECO:0007669"/>
    <property type="project" value="UniProtKB-SubCell"/>
</dbReference>
<dbReference type="GO" id="GO:0045259">
    <property type="term" value="C:proton-transporting ATP synthase complex"/>
    <property type="evidence" value="ECO:0007669"/>
    <property type="project" value="UniProtKB-KW"/>
</dbReference>
<dbReference type="GO" id="GO:0043531">
    <property type="term" value="F:ADP binding"/>
    <property type="evidence" value="ECO:0007669"/>
    <property type="project" value="TreeGrafter"/>
</dbReference>
<dbReference type="GO" id="GO:0005524">
    <property type="term" value="F:ATP binding"/>
    <property type="evidence" value="ECO:0007669"/>
    <property type="project" value="UniProtKB-UniRule"/>
</dbReference>
<dbReference type="GO" id="GO:0046933">
    <property type="term" value="F:proton-transporting ATP synthase activity, rotational mechanism"/>
    <property type="evidence" value="ECO:0007669"/>
    <property type="project" value="UniProtKB-UniRule"/>
</dbReference>
<dbReference type="CDD" id="cd18113">
    <property type="entry name" value="ATP-synt_F1_alpha_C"/>
    <property type="match status" value="1"/>
</dbReference>
<dbReference type="CDD" id="cd18116">
    <property type="entry name" value="ATP-synt_F1_alpha_N"/>
    <property type="match status" value="1"/>
</dbReference>
<dbReference type="CDD" id="cd01132">
    <property type="entry name" value="F1-ATPase_alpha_CD"/>
    <property type="match status" value="1"/>
</dbReference>
<dbReference type="FunFam" id="1.20.150.20:FF:000001">
    <property type="entry name" value="ATP synthase subunit alpha"/>
    <property type="match status" value="1"/>
</dbReference>
<dbReference type="FunFam" id="2.40.30.20:FF:000001">
    <property type="entry name" value="ATP synthase subunit alpha"/>
    <property type="match status" value="1"/>
</dbReference>
<dbReference type="FunFam" id="3.40.50.300:FF:000002">
    <property type="entry name" value="ATP synthase subunit alpha"/>
    <property type="match status" value="1"/>
</dbReference>
<dbReference type="Gene3D" id="2.40.30.20">
    <property type="match status" value="1"/>
</dbReference>
<dbReference type="Gene3D" id="1.20.150.20">
    <property type="entry name" value="ATP synthase alpha/beta chain, C-terminal domain"/>
    <property type="match status" value="1"/>
</dbReference>
<dbReference type="Gene3D" id="3.40.50.300">
    <property type="entry name" value="P-loop containing nucleotide triphosphate hydrolases"/>
    <property type="match status" value="1"/>
</dbReference>
<dbReference type="HAMAP" id="MF_01346">
    <property type="entry name" value="ATP_synth_alpha_bact"/>
    <property type="match status" value="1"/>
</dbReference>
<dbReference type="InterPro" id="IPR023366">
    <property type="entry name" value="ATP_synth_asu-like_sf"/>
</dbReference>
<dbReference type="InterPro" id="IPR000793">
    <property type="entry name" value="ATP_synth_asu_C"/>
</dbReference>
<dbReference type="InterPro" id="IPR038376">
    <property type="entry name" value="ATP_synth_asu_C_sf"/>
</dbReference>
<dbReference type="InterPro" id="IPR033732">
    <property type="entry name" value="ATP_synth_F1_a_nt-bd_dom"/>
</dbReference>
<dbReference type="InterPro" id="IPR005294">
    <property type="entry name" value="ATP_synth_F1_asu"/>
</dbReference>
<dbReference type="InterPro" id="IPR020003">
    <property type="entry name" value="ATPase_a/bsu_AS"/>
</dbReference>
<dbReference type="InterPro" id="IPR004100">
    <property type="entry name" value="ATPase_F1/V1/A1_a/bsu_N"/>
</dbReference>
<dbReference type="InterPro" id="IPR036121">
    <property type="entry name" value="ATPase_F1/V1/A1_a/bsu_N_sf"/>
</dbReference>
<dbReference type="InterPro" id="IPR000194">
    <property type="entry name" value="ATPase_F1/V1/A1_a/bsu_nucl-bd"/>
</dbReference>
<dbReference type="InterPro" id="IPR027417">
    <property type="entry name" value="P-loop_NTPase"/>
</dbReference>
<dbReference type="NCBIfam" id="TIGR00962">
    <property type="entry name" value="atpA"/>
    <property type="match status" value="1"/>
</dbReference>
<dbReference type="NCBIfam" id="NF009884">
    <property type="entry name" value="PRK13343.1"/>
    <property type="match status" value="1"/>
</dbReference>
<dbReference type="PANTHER" id="PTHR48082">
    <property type="entry name" value="ATP SYNTHASE SUBUNIT ALPHA, MITOCHONDRIAL"/>
    <property type="match status" value="1"/>
</dbReference>
<dbReference type="PANTHER" id="PTHR48082:SF2">
    <property type="entry name" value="ATP SYNTHASE SUBUNIT ALPHA, MITOCHONDRIAL"/>
    <property type="match status" value="1"/>
</dbReference>
<dbReference type="Pfam" id="PF00006">
    <property type="entry name" value="ATP-synt_ab"/>
    <property type="match status" value="1"/>
</dbReference>
<dbReference type="Pfam" id="PF00306">
    <property type="entry name" value="ATP-synt_ab_C"/>
    <property type="match status" value="1"/>
</dbReference>
<dbReference type="Pfam" id="PF02874">
    <property type="entry name" value="ATP-synt_ab_N"/>
    <property type="match status" value="1"/>
</dbReference>
<dbReference type="PIRSF" id="PIRSF039088">
    <property type="entry name" value="F_ATPase_subunit_alpha"/>
    <property type="match status" value="1"/>
</dbReference>
<dbReference type="SUPFAM" id="SSF47917">
    <property type="entry name" value="C-terminal domain of alpha and beta subunits of F1 ATP synthase"/>
    <property type="match status" value="1"/>
</dbReference>
<dbReference type="SUPFAM" id="SSF50615">
    <property type="entry name" value="N-terminal domain of alpha and beta subunits of F1 ATP synthase"/>
    <property type="match status" value="1"/>
</dbReference>
<dbReference type="SUPFAM" id="SSF52540">
    <property type="entry name" value="P-loop containing nucleoside triphosphate hydrolases"/>
    <property type="match status" value="1"/>
</dbReference>
<dbReference type="PROSITE" id="PS00152">
    <property type="entry name" value="ATPASE_ALPHA_BETA"/>
    <property type="match status" value="1"/>
</dbReference>
<geneLocation type="chloroplast"/>
<feature type="chain" id="PRO_0000339108" description="ATP synthase subunit alpha, chloroplastic">
    <location>
        <begin position="1"/>
        <end position="507"/>
    </location>
</feature>
<feature type="binding site" evidence="1">
    <location>
        <begin position="170"/>
        <end position="177"/>
    </location>
    <ligand>
        <name>ATP</name>
        <dbReference type="ChEBI" id="CHEBI:30616"/>
    </ligand>
</feature>
<feature type="site" description="Required for activity" evidence="1">
    <location>
        <position position="363"/>
    </location>
</feature>
<keyword id="KW-0066">ATP synthesis</keyword>
<keyword id="KW-0067">ATP-binding</keyword>
<keyword id="KW-0139">CF(1)</keyword>
<keyword id="KW-0150">Chloroplast</keyword>
<keyword id="KW-0375">Hydrogen ion transport</keyword>
<keyword id="KW-0406">Ion transport</keyword>
<keyword id="KW-0472">Membrane</keyword>
<keyword id="KW-0547">Nucleotide-binding</keyword>
<keyword id="KW-0934">Plastid</keyword>
<keyword id="KW-0793">Thylakoid</keyword>
<keyword id="KW-1278">Translocase</keyword>
<keyword id="KW-0813">Transport</keyword>